<gene>
    <name type="primary">ARMCX1</name>
</gene>
<organism>
    <name type="scientific">Pongo abelii</name>
    <name type="common">Sumatran orangutan</name>
    <name type="synonym">Pongo pygmaeus abelii</name>
    <dbReference type="NCBI Taxonomy" id="9601"/>
    <lineage>
        <taxon>Eukaryota</taxon>
        <taxon>Metazoa</taxon>
        <taxon>Chordata</taxon>
        <taxon>Craniata</taxon>
        <taxon>Vertebrata</taxon>
        <taxon>Euteleostomi</taxon>
        <taxon>Mammalia</taxon>
        <taxon>Eutheria</taxon>
        <taxon>Euarchontoglires</taxon>
        <taxon>Primates</taxon>
        <taxon>Haplorrhini</taxon>
        <taxon>Catarrhini</taxon>
        <taxon>Hominidae</taxon>
        <taxon>Pongo</taxon>
    </lineage>
</organism>
<dbReference type="EMBL" id="CR861343">
    <property type="protein sequence ID" value="CAH93404.1"/>
    <property type="molecule type" value="mRNA"/>
</dbReference>
<dbReference type="RefSeq" id="NP_001126998.1">
    <property type="nucleotide sequence ID" value="NM_001133526.1"/>
</dbReference>
<dbReference type="SMR" id="Q5R4B2"/>
<dbReference type="FunCoup" id="Q5R4B2">
    <property type="interactions" value="313"/>
</dbReference>
<dbReference type="STRING" id="9601.ENSPPYP00000023011"/>
<dbReference type="GeneID" id="100174021"/>
<dbReference type="KEGG" id="pon:100174021"/>
<dbReference type="CTD" id="51309"/>
<dbReference type="eggNOG" id="ENOG502QYZW">
    <property type="taxonomic scope" value="Eukaryota"/>
</dbReference>
<dbReference type="InParanoid" id="Q5R4B2"/>
<dbReference type="OrthoDB" id="10017790at2759"/>
<dbReference type="Proteomes" id="UP000001595">
    <property type="component" value="Unplaced"/>
</dbReference>
<dbReference type="GO" id="GO:0005741">
    <property type="term" value="C:mitochondrial outer membrane"/>
    <property type="evidence" value="ECO:0007669"/>
    <property type="project" value="UniProtKB-SubCell"/>
</dbReference>
<dbReference type="Gene3D" id="1.25.10.10">
    <property type="entry name" value="Leucine-rich Repeat Variant"/>
    <property type="match status" value="1"/>
</dbReference>
<dbReference type="InterPro" id="IPR011989">
    <property type="entry name" value="ARM-like"/>
</dbReference>
<dbReference type="InterPro" id="IPR006911">
    <property type="entry name" value="ARM-rpt_dom"/>
</dbReference>
<dbReference type="InterPro" id="IPR016024">
    <property type="entry name" value="ARM-type_fold"/>
</dbReference>
<dbReference type="InterPro" id="IPR000225">
    <property type="entry name" value="Armadillo"/>
</dbReference>
<dbReference type="InterPro" id="IPR051303">
    <property type="entry name" value="Armcx_regulator"/>
</dbReference>
<dbReference type="PANTHER" id="PTHR15712">
    <property type="entry name" value="ARMADILLO REPEAT CONTAINING PROTEIN"/>
    <property type="match status" value="1"/>
</dbReference>
<dbReference type="PANTHER" id="PTHR15712:SF14">
    <property type="entry name" value="ARMADILLO REPEAT-CONTAINING X-LINKED PROTEIN 1"/>
    <property type="match status" value="1"/>
</dbReference>
<dbReference type="Pfam" id="PF04826">
    <property type="entry name" value="Arm_2"/>
    <property type="match status" value="1"/>
</dbReference>
<dbReference type="SMART" id="SM00185">
    <property type="entry name" value="ARM"/>
    <property type="match status" value="2"/>
</dbReference>
<dbReference type="SUPFAM" id="SSF48371">
    <property type="entry name" value="ARM repeat"/>
    <property type="match status" value="1"/>
</dbReference>
<dbReference type="PROSITE" id="PS50176">
    <property type="entry name" value="ARM_REPEAT"/>
    <property type="match status" value="1"/>
</dbReference>
<protein>
    <recommendedName>
        <fullName>Armadillo repeat-containing X-linked protein 1</fullName>
    </recommendedName>
</protein>
<evidence type="ECO:0000250" key="1">
    <source>
        <dbReference type="UniProtKB" id="Q8BHS6"/>
    </source>
</evidence>
<evidence type="ECO:0000250" key="2">
    <source>
        <dbReference type="UniProtKB" id="Q9CX83"/>
    </source>
</evidence>
<evidence type="ECO:0000255" key="3"/>
<evidence type="ECO:0000256" key="4">
    <source>
        <dbReference type="SAM" id="MobiDB-lite"/>
    </source>
</evidence>
<evidence type="ECO:0000305" key="5"/>
<proteinExistence type="evidence at transcript level"/>
<sequence>MGRTREAGCVAAGVVIGAGACYCVYRLAWGRDENEKIWDEDEESTDTSEIGVETVKGAKTSVGAGSGVKLQGDSKVKPEVNLGLEDCPGVKEKAHSGSHRGGGLEAKAKALFNTLKEQASAKAGKGARMGTITGNRTLAPSLPCPGGRGGGCHPTRSGSRAGGRASGKSKGKARSKSTRAPATTWPVRRGKFNFPYKIDDILSAPDLQKVLNILERTNDPFIQEVALVTLGNNAAYSFNQNAIRELGGVPIIAKLIKTKDPIIREKTYNALNNLSVNAENQGKIKTYISQVCDDTMVCRLDSAVQMAGLRLLTNMTVTNHYQHLLSYSFPDFFALLFLGNHFTKIQIMKLIINFTENPAMTRELVSCKVPSELISLFNKEWDREILLNILTLFENINDNIKNEGLASSRKEFSRSSLFFLFKESGVCVKKIKALANHNDLVVKVKVLKVLTKL</sequence>
<keyword id="KW-0472">Membrane</keyword>
<keyword id="KW-0496">Mitochondrion</keyword>
<keyword id="KW-1000">Mitochondrion outer membrane</keyword>
<keyword id="KW-1185">Reference proteome</keyword>
<keyword id="KW-0677">Repeat</keyword>
<keyword id="KW-0735">Signal-anchor</keyword>
<keyword id="KW-0812">Transmembrane</keyword>
<keyword id="KW-1133">Transmembrane helix</keyword>
<accession>Q5R4B2</accession>
<comment type="function">
    <text evidence="2">Regulates mitochondrial transport during axon regeneration. Increases the proportion of motile mitochondria by recruiting stationary mitochondria into the motile pool. Enhances mitochondria movement and neurite growth in both adult axons and embryonic neurons. Promotes neuronal survival and axon regeneration after nerve injury. May link mitochondria to the Trak1-kinesin motor complex via its interaction with MIRO1.</text>
</comment>
<comment type="subunit">
    <text evidence="2">Interacts with MIRO1.</text>
</comment>
<comment type="subcellular location">
    <subcellularLocation>
        <location evidence="2">Mitochondrion</location>
    </subcellularLocation>
    <subcellularLocation>
        <location evidence="2">Mitochondrion outer membrane</location>
        <topology evidence="3">Single-pass membrane protein</topology>
    </subcellularLocation>
</comment>
<comment type="similarity">
    <text evidence="5">Belongs to the eutherian X-chromosome-specific Armcx family.</text>
</comment>
<reference key="1">
    <citation type="submission" date="2004-11" db="EMBL/GenBank/DDBJ databases">
        <authorList>
            <consortium name="The German cDNA consortium"/>
        </authorList>
    </citation>
    <scope>NUCLEOTIDE SEQUENCE [LARGE SCALE MRNA]</scope>
    <source>
        <tissue>Brain cortex</tissue>
    </source>
</reference>
<feature type="chain" id="PRO_0000191361" description="Armadillo repeat-containing X-linked protein 1">
    <location>
        <begin position="1"/>
        <end position="453"/>
    </location>
</feature>
<feature type="topological domain" description="Mitochondrial intermembrane" evidence="1">
    <location>
        <begin position="1"/>
        <end position="6"/>
    </location>
</feature>
<feature type="transmembrane region" description="Helical; Signal-anchor" evidence="3">
    <location>
        <begin position="7"/>
        <end position="29"/>
    </location>
</feature>
<feature type="topological domain" description="Cytoplasmic" evidence="1">
    <location>
        <begin position="30"/>
        <end position="453"/>
    </location>
</feature>
<feature type="repeat" description="ARM 1" evidence="3">
    <location>
        <begin position="195"/>
        <end position="235"/>
    </location>
</feature>
<feature type="repeat" description="ARM 2" evidence="3">
    <location>
        <begin position="237"/>
        <end position="276"/>
    </location>
</feature>
<feature type="repeat" description="ARM 3" evidence="3">
    <location>
        <begin position="358"/>
        <end position="398"/>
    </location>
</feature>
<feature type="repeat" description="ARM 4" evidence="3">
    <location>
        <begin position="415"/>
        <end position="453"/>
    </location>
</feature>
<feature type="region of interest" description="Mitochondrion outer membrane (MOM)-targeting sequence" evidence="5">
    <location>
        <begin position="1"/>
        <end position="6"/>
    </location>
</feature>
<feature type="region of interest" description="Mitochondrion outer membrane (MOM)-targeting sequence" evidence="5">
    <location>
        <begin position="26"/>
        <end position="36"/>
    </location>
</feature>
<feature type="region of interest" description="Disordered" evidence="4">
    <location>
        <begin position="140"/>
        <end position="182"/>
    </location>
</feature>
<feature type="compositionally biased region" description="Basic residues" evidence="4">
    <location>
        <begin position="167"/>
        <end position="177"/>
    </location>
</feature>
<name>ARMX1_PONAB</name>